<sequence>MSIYHDVIKSEVFPALGCTEPIAVAYAASLAAERLGAEVETVTASVDPGVFKNGFAVTVPKTGGLKGNVIAAALGALIARPELKMEILSGADERLLAQAELLVSSGRATVALVKERTDLYIDVVVTGGGRTARAVLEGGHTNIVRLECDGRILLNADEPVSAVDSHAYRAVLRQMTFSEMIGLLDDLDQGDLVYLKRGVEMNLRIAEEGKQLTKVGHYVEELVRKGFLLADVVSSSKILTASASDARMAGLPYPVMSSGGSGNQGIVAILVPYNVGMFFHVPEETILRSIALSHLVNAYIKCHTGDLAPICGCAIAAGVGAAVAIVYQQAGPDMHKIDLAVNTIISDIGGMLCDGAKGGCALKVVSSTDAAIRAAYMALNGHGISEEEGFVGKSAEETIHNLSRIADKGMALVDDTMLCIMLQKRSTEP</sequence>
<comment type="similarity">
    <text evidence="1">Belongs to the UPF0597 family.</text>
</comment>
<protein>
    <recommendedName>
        <fullName evidence="1">UPF0597 protein GSU1527</fullName>
    </recommendedName>
</protein>
<dbReference type="EMBL" id="AE017180">
    <property type="protein sequence ID" value="AAR34901.1"/>
    <property type="molecule type" value="Genomic_DNA"/>
</dbReference>
<dbReference type="RefSeq" id="NP_952578.1">
    <property type="nucleotide sequence ID" value="NC_002939.5"/>
</dbReference>
<dbReference type="RefSeq" id="WP_010942174.1">
    <property type="nucleotide sequence ID" value="NC_002939.5"/>
</dbReference>
<dbReference type="SMR" id="Q74CZ2"/>
<dbReference type="FunCoup" id="Q74CZ2">
    <property type="interactions" value="39"/>
</dbReference>
<dbReference type="STRING" id="243231.GSU1527"/>
<dbReference type="EnsemblBacteria" id="AAR34901">
    <property type="protein sequence ID" value="AAR34901"/>
    <property type="gene ID" value="GSU1527"/>
</dbReference>
<dbReference type="KEGG" id="gsu:GSU1527"/>
<dbReference type="PATRIC" id="fig|243231.5.peg.1570"/>
<dbReference type="eggNOG" id="COG3681">
    <property type="taxonomic scope" value="Bacteria"/>
</dbReference>
<dbReference type="HOGENOM" id="CLU_051840_0_0_7"/>
<dbReference type="InParanoid" id="Q74CZ2"/>
<dbReference type="OrthoDB" id="41906at2"/>
<dbReference type="Proteomes" id="UP000000577">
    <property type="component" value="Chromosome"/>
</dbReference>
<dbReference type="GO" id="GO:0080146">
    <property type="term" value="F:L-cysteine desulfhydrase activity"/>
    <property type="evidence" value="ECO:0000318"/>
    <property type="project" value="GO_Central"/>
</dbReference>
<dbReference type="GO" id="GO:0019450">
    <property type="term" value="P:L-cysteine catabolic process to pyruvate"/>
    <property type="evidence" value="ECO:0000318"/>
    <property type="project" value="GO_Central"/>
</dbReference>
<dbReference type="HAMAP" id="MF_01845">
    <property type="entry name" value="UPF0597"/>
    <property type="match status" value="1"/>
</dbReference>
<dbReference type="InterPro" id="IPR005130">
    <property type="entry name" value="Ser_deHydtase-like_asu"/>
</dbReference>
<dbReference type="InterPro" id="IPR021144">
    <property type="entry name" value="UPF0597"/>
</dbReference>
<dbReference type="PANTHER" id="PTHR30501">
    <property type="entry name" value="UPF0597 PROTEIN YHAM"/>
    <property type="match status" value="1"/>
</dbReference>
<dbReference type="PANTHER" id="PTHR30501:SF2">
    <property type="entry name" value="UPF0597 PROTEIN YHAM"/>
    <property type="match status" value="1"/>
</dbReference>
<dbReference type="Pfam" id="PF03313">
    <property type="entry name" value="SDH_alpha"/>
    <property type="match status" value="1"/>
</dbReference>
<dbReference type="PIRSF" id="PIRSF006054">
    <property type="entry name" value="UCP006054"/>
    <property type="match status" value="1"/>
</dbReference>
<organism>
    <name type="scientific">Geobacter sulfurreducens (strain ATCC 51573 / DSM 12127 / PCA)</name>
    <dbReference type="NCBI Taxonomy" id="243231"/>
    <lineage>
        <taxon>Bacteria</taxon>
        <taxon>Pseudomonadati</taxon>
        <taxon>Thermodesulfobacteriota</taxon>
        <taxon>Desulfuromonadia</taxon>
        <taxon>Geobacterales</taxon>
        <taxon>Geobacteraceae</taxon>
        <taxon>Geobacter</taxon>
    </lineage>
</organism>
<accession>Q74CZ2</accession>
<keyword id="KW-1185">Reference proteome</keyword>
<proteinExistence type="inferred from homology"/>
<gene>
    <name type="ordered locus">GSU1527</name>
</gene>
<feature type="chain" id="PRO_0000339830" description="UPF0597 protein GSU1527">
    <location>
        <begin position="1"/>
        <end position="429"/>
    </location>
</feature>
<name>Y1527_GEOSL</name>
<reference key="1">
    <citation type="journal article" date="2003" name="Science">
        <title>Genome of Geobacter sulfurreducens: metal reduction in subsurface environments.</title>
        <authorList>
            <person name="Methe B.A."/>
            <person name="Nelson K.E."/>
            <person name="Eisen J.A."/>
            <person name="Paulsen I.T."/>
            <person name="Nelson W.C."/>
            <person name="Heidelberg J.F."/>
            <person name="Wu D."/>
            <person name="Wu M."/>
            <person name="Ward N.L."/>
            <person name="Beanan M.J."/>
            <person name="Dodson R.J."/>
            <person name="Madupu R."/>
            <person name="Brinkac L.M."/>
            <person name="Daugherty S.C."/>
            <person name="DeBoy R.T."/>
            <person name="Durkin A.S."/>
            <person name="Gwinn M.L."/>
            <person name="Kolonay J.F."/>
            <person name="Sullivan S.A."/>
            <person name="Haft D.H."/>
            <person name="Selengut J."/>
            <person name="Davidsen T.M."/>
            <person name="Zafar N."/>
            <person name="White O."/>
            <person name="Tran B."/>
            <person name="Romero C."/>
            <person name="Forberger H.A."/>
            <person name="Weidman J.F."/>
            <person name="Khouri H.M."/>
            <person name="Feldblyum T.V."/>
            <person name="Utterback T.R."/>
            <person name="Van Aken S.E."/>
            <person name="Lovley D.R."/>
            <person name="Fraser C.M."/>
        </authorList>
    </citation>
    <scope>NUCLEOTIDE SEQUENCE [LARGE SCALE GENOMIC DNA]</scope>
    <source>
        <strain>ATCC 51573 / DSM 12127 / PCA</strain>
    </source>
</reference>
<evidence type="ECO:0000255" key="1">
    <source>
        <dbReference type="HAMAP-Rule" id="MF_01845"/>
    </source>
</evidence>